<protein>
    <recommendedName>
        <fullName evidence="1">Ribosomal RNA small subunit methyltransferase J</fullName>
        <ecNumber evidence="1">2.1.1.242</ecNumber>
    </recommendedName>
    <alternativeName>
        <fullName evidence="1">16S rRNA m2G1516 methyltransferase</fullName>
    </alternativeName>
    <alternativeName>
        <fullName evidence="1">rRNA (guanine-N(2)-)-methyltransferase</fullName>
    </alternativeName>
</protein>
<accession>A1JSQ2</accession>
<proteinExistence type="inferred from homology"/>
<gene>
    <name evidence="1" type="primary">rsmJ</name>
    <name type="ordered locus">YE4053</name>
</gene>
<keyword id="KW-0963">Cytoplasm</keyword>
<keyword id="KW-0489">Methyltransferase</keyword>
<keyword id="KW-0698">rRNA processing</keyword>
<keyword id="KW-0949">S-adenosyl-L-methionine</keyword>
<keyword id="KW-0808">Transferase</keyword>
<organism>
    <name type="scientific">Yersinia enterocolitica serotype O:8 / biotype 1B (strain NCTC 13174 / 8081)</name>
    <dbReference type="NCBI Taxonomy" id="393305"/>
    <lineage>
        <taxon>Bacteria</taxon>
        <taxon>Pseudomonadati</taxon>
        <taxon>Pseudomonadota</taxon>
        <taxon>Gammaproteobacteria</taxon>
        <taxon>Enterobacterales</taxon>
        <taxon>Yersiniaceae</taxon>
        <taxon>Yersinia</taxon>
    </lineage>
</organism>
<name>RSMJ_YERE8</name>
<sequence length="252" mass="27357">MSQVSICLLSEAGADPGALSILAERWGLVSDEQSIMALVLTPERLELRKRDEPKLGGIYVDFVAGTLAHRRKFGGGRGEAVAKAVGIKKGYLPRVVDATAGLGRDAFVLAALGCHVQMLERNPVVAALLDDGLRRGYQDAEIGPWLRERLTLLHASSLTALAEIEPRPEVVYLDPMYPHRQKSALVKKEMRVFQSLVGADEDADGLLAPARALATKRVVVKRPDYAEPLAGIAAQAAVTTKSHRFDLYMPLL</sequence>
<comment type="function">
    <text evidence="1">Specifically methylates the guanosine in position 1516 of 16S rRNA.</text>
</comment>
<comment type="catalytic activity">
    <reaction evidence="1">
        <text>guanosine(1516) in 16S rRNA + S-adenosyl-L-methionine = N(2)-methylguanosine(1516) in 16S rRNA + S-adenosyl-L-homocysteine + H(+)</text>
        <dbReference type="Rhea" id="RHEA:43220"/>
        <dbReference type="Rhea" id="RHEA-COMP:10412"/>
        <dbReference type="Rhea" id="RHEA-COMP:10413"/>
        <dbReference type="ChEBI" id="CHEBI:15378"/>
        <dbReference type="ChEBI" id="CHEBI:57856"/>
        <dbReference type="ChEBI" id="CHEBI:59789"/>
        <dbReference type="ChEBI" id="CHEBI:74269"/>
        <dbReference type="ChEBI" id="CHEBI:74481"/>
        <dbReference type="EC" id="2.1.1.242"/>
    </reaction>
</comment>
<comment type="subcellular location">
    <subcellularLocation>
        <location evidence="1">Cytoplasm</location>
    </subcellularLocation>
</comment>
<comment type="similarity">
    <text evidence="1">Belongs to the methyltransferase superfamily. RsmJ family.</text>
</comment>
<feature type="chain" id="PRO_0000292652" description="Ribosomal RNA small subunit methyltransferase J">
    <location>
        <begin position="1"/>
        <end position="252"/>
    </location>
</feature>
<feature type="binding site" evidence="1">
    <location>
        <begin position="104"/>
        <end position="105"/>
    </location>
    <ligand>
        <name>S-adenosyl-L-methionine</name>
        <dbReference type="ChEBI" id="CHEBI:59789"/>
    </ligand>
</feature>
<feature type="binding site" evidence="1">
    <location>
        <begin position="120"/>
        <end position="121"/>
    </location>
    <ligand>
        <name>S-adenosyl-L-methionine</name>
        <dbReference type="ChEBI" id="CHEBI:59789"/>
    </ligand>
</feature>
<feature type="binding site" evidence="1">
    <location>
        <begin position="156"/>
        <end position="157"/>
    </location>
    <ligand>
        <name>S-adenosyl-L-methionine</name>
        <dbReference type="ChEBI" id="CHEBI:59789"/>
    </ligand>
</feature>
<feature type="binding site" evidence="1">
    <location>
        <position position="174"/>
    </location>
    <ligand>
        <name>S-adenosyl-L-methionine</name>
        <dbReference type="ChEBI" id="CHEBI:59789"/>
    </ligand>
</feature>
<reference key="1">
    <citation type="journal article" date="2006" name="PLoS Genet.">
        <title>The complete genome sequence and comparative genome analysis of the high pathogenicity Yersinia enterocolitica strain 8081.</title>
        <authorList>
            <person name="Thomson N.R."/>
            <person name="Howard S."/>
            <person name="Wren B.W."/>
            <person name="Holden M.T.G."/>
            <person name="Crossman L."/>
            <person name="Challis G.L."/>
            <person name="Churcher C."/>
            <person name="Mungall K."/>
            <person name="Brooks K."/>
            <person name="Chillingworth T."/>
            <person name="Feltwell T."/>
            <person name="Abdellah Z."/>
            <person name="Hauser H."/>
            <person name="Jagels K."/>
            <person name="Maddison M."/>
            <person name="Moule S."/>
            <person name="Sanders M."/>
            <person name="Whitehead S."/>
            <person name="Quail M.A."/>
            <person name="Dougan G."/>
            <person name="Parkhill J."/>
            <person name="Prentice M.B."/>
        </authorList>
    </citation>
    <scope>NUCLEOTIDE SEQUENCE [LARGE SCALE GENOMIC DNA]</scope>
    <source>
        <strain>NCTC 13174 / 8081</strain>
    </source>
</reference>
<evidence type="ECO:0000255" key="1">
    <source>
        <dbReference type="HAMAP-Rule" id="MF_01523"/>
    </source>
</evidence>
<dbReference type="EC" id="2.1.1.242" evidence="1"/>
<dbReference type="EMBL" id="AM286415">
    <property type="protein sequence ID" value="CAL14071.1"/>
    <property type="molecule type" value="Genomic_DNA"/>
</dbReference>
<dbReference type="RefSeq" id="WP_005174842.1">
    <property type="nucleotide sequence ID" value="NC_008800.1"/>
</dbReference>
<dbReference type="RefSeq" id="YP_001008195.1">
    <property type="nucleotide sequence ID" value="NC_008800.1"/>
</dbReference>
<dbReference type="SMR" id="A1JSQ2"/>
<dbReference type="KEGG" id="yen:YE4053"/>
<dbReference type="PATRIC" id="fig|393305.7.peg.4314"/>
<dbReference type="eggNOG" id="COG0742">
    <property type="taxonomic scope" value="Bacteria"/>
</dbReference>
<dbReference type="HOGENOM" id="CLU_076324_0_0_6"/>
<dbReference type="OrthoDB" id="3191794at2"/>
<dbReference type="Proteomes" id="UP000000642">
    <property type="component" value="Chromosome"/>
</dbReference>
<dbReference type="GO" id="GO:0005737">
    <property type="term" value="C:cytoplasm"/>
    <property type="evidence" value="ECO:0007669"/>
    <property type="project" value="UniProtKB-SubCell"/>
</dbReference>
<dbReference type="GO" id="GO:0008990">
    <property type="term" value="F:rRNA (guanine-N2-)-methyltransferase activity"/>
    <property type="evidence" value="ECO:0007669"/>
    <property type="project" value="UniProtKB-UniRule"/>
</dbReference>
<dbReference type="CDD" id="cd02440">
    <property type="entry name" value="AdoMet_MTases"/>
    <property type="match status" value="1"/>
</dbReference>
<dbReference type="Gene3D" id="3.40.50.150">
    <property type="entry name" value="Vaccinia Virus protein VP39"/>
    <property type="match status" value="1"/>
</dbReference>
<dbReference type="Gene3D" id="3.40.1630.10">
    <property type="entry name" value="YhiQ-like domain"/>
    <property type="match status" value="1"/>
</dbReference>
<dbReference type="HAMAP" id="MF_01523">
    <property type="entry name" value="16SrRNA_methyltr_J"/>
    <property type="match status" value="1"/>
</dbReference>
<dbReference type="InterPro" id="IPR007536">
    <property type="entry name" value="16SrRNA_methylTrfase_J"/>
</dbReference>
<dbReference type="InterPro" id="IPR029063">
    <property type="entry name" value="SAM-dependent_MTases_sf"/>
</dbReference>
<dbReference type="NCBIfam" id="NF008012">
    <property type="entry name" value="PRK10742.1"/>
    <property type="match status" value="1"/>
</dbReference>
<dbReference type="PANTHER" id="PTHR36112">
    <property type="entry name" value="RIBOSOMAL RNA SMALL SUBUNIT METHYLTRANSFERASE J"/>
    <property type="match status" value="1"/>
</dbReference>
<dbReference type="PANTHER" id="PTHR36112:SF1">
    <property type="entry name" value="RIBOSOMAL RNA SMALL SUBUNIT METHYLTRANSFERASE J"/>
    <property type="match status" value="1"/>
</dbReference>
<dbReference type="Pfam" id="PF04445">
    <property type="entry name" value="SAM_MT"/>
    <property type="match status" value="1"/>
</dbReference>
<dbReference type="SUPFAM" id="SSF53335">
    <property type="entry name" value="S-adenosyl-L-methionine-dependent methyltransferases"/>
    <property type="match status" value="1"/>
</dbReference>